<dbReference type="EMBL" id="CP000316">
    <property type="protein sequence ID" value="ABE43363.1"/>
    <property type="molecule type" value="Genomic_DNA"/>
</dbReference>
<dbReference type="RefSeq" id="WP_011482362.1">
    <property type="nucleotide sequence ID" value="NC_007948.1"/>
</dbReference>
<dbReference type="SMR" id="Q12DM9"/>
<dbReference type="STRING" id="296591.Bpro_1414"/>
<dbReference type="KEGG" id="pol:Bpro_1414"/>
<dbReference type="eggNOG" id="COG0829">
    <property type="taxonomic scope" value="Bacteria"/>
</dbReference>
<dbReference type="HOGENOM" id="CLU_056339_0_0_4"/>
<dbReference type="OrthoDB" id="9798842at2"/>
<dbReference type="Proteomes" id="UP000001983">
    <property type="component" value="Chromosome"/>
</dbReference>
<dbReference type="GO" id="GO:0005737">
    <property type="term" value="C:cytoplasm"/>
    <property type="evidence" value="ECO:0007669"/>
    <property type="project" value="UniProtKB-SubCell"/>
</dbReference>
<dbReference type="GO" id="GO:0016151">
    <property type="term" value="F:nickel cation binding"/>
    <property type="evidence" value="ECO:0007669"/>
    <property type="project" value="UniProtKB-UniRule"/>
</dbReference>
<dbReference type="HAMAP" id="MF_01384">
    <property type="entry name" value="UreD"/>
    <property type="match status" value="1"/>
</dbReference>
<dbReference type="InterPro" id="IPR002669">
    <property type="entry name" value="UreD"/>
</dbReference>
<dbReference type="PANTHER" id="PTHR33643">
    <property type="entry name" value="UREASE ACCESSORY PROTEIN D"/>
    <property type="match status" value="1"/>
</dbReference>
<dbReference type="PANTHER" id="PTHR33643:SF1">
    <property type="entry name" value="UREASE ACCESSORY PROTEIN D"/>
    <property type="match status" value="1"/>
</dbReference>
<dbReference type="Pfam" id="PF01774">
    <property type="entry name" value="UreD"/>
    <property type="match status" value="1"/>
</dbReference>
<evidence type="ECO:0000255" key="1">
    <source>
        <dbReference type="HAMAP-Rule" id="MF_01384"/>
    </source>
</evidence>
<protein>
    <recommendedName>
        <fullName evidence="1">Urease accessory protein UreD</fullName>
    </recommendedName>
</protein>
<feature type="chain" id="PRO_0000340472" description="Urease accessory protein UreD">
    <location>
        <begin position="1"/>
        <end position="276"/>
    </location>
</feature>
<name>URED_POLSJ</name>
<organism>
    <name type="scientific">Polaromonas sp. (strain JS666 / ATCC BAA-500)</name>
    <dbReference type="NCBI Taxonomy" id="296591"/>
    <lineage>
        <taxon>Bacteria</taxon>
        <taxon>Pseudomonadati</taxon>
        <taxon>Pseudomonadota</taxon>
        <taxon>Betaproteobacteria</taxon>
        <taxon>Burkholderiales</taxon>
        <taxon>Comamonadaceae</taxon>
        <taxon>Polaromonas</taxon>
    </lineage>
</organism>
<comment type="function">
    <text evidence="1">Required for maturation of urease via the functional incorporation of the urease nickel metallocenter.</text>
</comment>
<comment type="subunit">
    <text evidence="1">UreD, UreF and UreG form a complex that acts as a GTP-hydrolysis-dependent molecular chaperone, activating the urease apoprotein by helping to assemble the nickel containing metallocenter of UreC. The UreE protein probably delivers the nickel.</text>
</comment>
<comment type="subcellular location">
    <subcellularLocation>
        <location evidence="1">Cytoplasm</location>
    </subcellularLocation>
</comment>
<comment type="similarity">
    <text evidence="1">Belongs to the UreD family.</text>
</comment>
<sequence length="276" mass="29832">MTWNATLALDYTRQAGKTVAHFRHSGPLRILQSLYPEGDAICHNVIVHPPGGLVGGDTLDLQFSASAGAHGLITTPGATRFYRSTGEPALQRTHLTLEAGARMEWLPLEAICYSGCLAENHLTMTLAPGAELIGWDITALGLPAASLPFAHGSFCQHIEVPGVWLERARIQASDTLLMSSPLGMAGHRCVASLFFVAGSKLDRHRRQQALDTARQIIEAHPLSATAGATSPDGQVVVVRVLAPVVEPAMALLRQVWLAWRSHFWQQAASSPRIWSM</sequence>
<proteinExistence type="inferred from homology"/>
<gene>
    <name evidence="1" type="primary">ureD</name>
    <name type="ordered locus">Bpro_1414</name>
</gene>
<keyword id="KW-0143">Chaperone</keyword>
<keyword id="KW-0963">Cytoplasm</keyword>
<keyword id="KW-0996">Nickel insertion</keyword>
<keyword id="KW-1185">Reference proteome</keyword>
<reference key="1">
    <citation type="journal article" date="2008" name="Appl. Environ. Microbiol.">
        <title>The genome of Polaromonas sp. strain JS666: insights into the evolution of a hydrocarbon- and xenobiotic-degrading bacterium, and features of relevance to biotechnology.</title>
        <authorList>
            <person name="Mattes T.E."/>
            <person name="Alexander A.K."/>
            <person name="Richardson P.M."/>
            <person name="Munk A.C."/>
            <person name="Han C.S."/>
            <person name="Stothard P."/>
            <person name="Coleman N.V."/>
        </authorList>
    </citation>
    <scope>NUCLEOTIDE SEQUENCE [LARGE SCALE GENOMIC DNA]</scope>
    <source>
        <strain>JS666 / ATCC BAA-500</strain>
    </source>
</reference>
<accession>Q12DM9</accession>